<dbReference type="EMBL" id="CR380947">
    <property type="protein sequence ID" value="CAG57726.1"/>
    <property type="molecule type" value="Genomic_DNA"/>
</dbReference>
<dbReference type="RefSeq" id="XP_444833.1">
    <property type="nucleotide sequence ID" value="XM_444833.1"/>
</dbReference>
<dbReference type="SMR" id="Q6FXY9"/>
<dbReference type="FunCoup" id="Q6FXY9">
    <property type="interactions" value="960"/>
</dbReference>
<dbReference type="STRING" id="284593.Q6FXY9"/>
<dbReference type="EnsemblFungi" id="CAGL0A01562g-T">
    <property type="protein sequence ID" value="CAGL0A01562g-T-p1"/>
    <property type="gene ID" value="CAGL0A01562g"/>
</dbReference>
<dbReference type="KEGG" id="cgr:2886312"/>
<dbReference type="CGD" id="CAL0126793">
    <property type="gene designation" value="CAGL0A01562g"/>
</dbReference>
<dbReference type="VEuPathDB" id="FungiDB:B1J91_A01562g"/>
<dbReference type="VEuPathDB" id="FungiDB:CAGL0A01562g"/>
<dbReference type="eggNOG" id="KOG1722">
    <property type="taxonomic scope" value="Eukaryota"/>
</dbReference>
<dbReference type="HOGENOM" id="CLU_106411_0_0_1"/>
<dbReference type="InParanoid" id="Q6FXY9"/>
<dbReference type="OMA" id="PGHGKKM"/>
<dbReference type="Proteomes" id="UP000002428">
    <property type="component" value="Chromosome A"/>
</dbReference>
<dbReference type="GO" id="GO:0022625">
    <property type="term" value="C:cytosolic large ribosomal subunit"/>
    <property type="evidence" value="ECO:0007669"/>
    <property type="project" value="TreeGrafter"/>
</dbReference>
<dbReference type="GO" id="GO:0003729">
    <property type="term" value="F:mRNA binding"/>
    <property type="evidence" value="ECO:0007669"/>
    <property type="project" value="TreeGrafter"/>
</dbReference>
<dbReference type="GO" id="GO:0003735">
    <property type="term" value="F:structural constituent of ribosome"/>
    <property type="evidence" value="ECO:0007669"/>
    <property type="project" value="InterPro"/>
</dbReference>
<dbReference type="GO" id="GO:0002181">
    <property type="term" value="P:cytoplasmic translation"/>
    <property type="evidence" value="ECO:0007669"/>
    <property type="project" value="TreeGrafter"/>
</dbReference>
<dbReference type="CDD" id="cd00472">
    <property type="entry name" value="Ribosomal_L24e_L24"/>
    <property type="match status" value="1"/>
</dbReference>
<dbReference type="FunFam" id="2.30.170.20:FF:000002">
    <property type="entry name" value="60S ribosomal protein L24"/>
    <property type="match status" value="1"/>
</dbReference>
<dbReference type="Gene3D" id="6.10.250.1270">
    <property type="match status" value="1"/>
</dbReference>
<dbReference type="Gene3D" id="2.30.170.20">
    <property type="entry name" value="Ribosomal protein L24e"/>
    <property type="match status" value="1"/>
</dbReference>
<dbReference type="InterPro" id="IPR038630">
    <property type="entry name" value="L24e/L24_sf"/>
</dbReference>
<dbReference type="InterPro" id="IPR056366">
    <property type="entry name" value="Ribosomal_eL24"/>
</dbReference>
<dbReference type="InterPro" id="IPR000988">
    <property type="entry name" value="Ribosomal_eL24-rel_N"/>
</dbReference>
<dbReference type="InterPro" id="IPR023442">
    <property type="entry name" value="Ribosomal_eL24_CS"/>
</dbReference>
<dbReference type="PANTHER" id="PTHR10792">
    <property type="entry name" value="60S RIBOSOMAL PROTEIN L24"/>
    <property type="match status" value="1"/>
</dbReference>
<dbReference type="PANTHER" id="PTHR10792:SF1">
    <property type="entry name" value="RIBOSOMAL PROTEIN L24"/>
    <property type="match status" value="1"/>
</dbReference>
<dbReference type="Pfam" id="PF01246">
    <property type="entry name" value="Ribosomal_L24e"/>
    <property type="match status" value="1"/>
</dbReference>
<dbReference type="SUPFAM" id="SSF57716">
    <property type="entry name" value="Glucocorticoid receptor-like (DNA-binding domain)"/>
    <property type="match status" value="1"/>
</dbReference>
<dbReference type="PROSITE" id="PS01073">
    <property type="entry name" value="RIBOSOMAL_L24E"/>
    <property type="match status" value="1"/>
</dbReference>
<gene>
    <name type="primary">RPL24</name>
    <name type="ordered locus">CAGL0A01562g</name>
</gene>
<proteinExistence type="inferred from homology"/>
<comment type="similarity">
    <text evidence="2">Belongs to the eukaryotic ribosomal protein eL24 family.</text>
</comment>
<sequence length="155" mass="17492">MKVEIDSFSGAKIYPGRGTLFVRGDSKIFRFQNSKSASLFKQRKNPRRVAWTVLYRRHHKKGITEEVAKKRSRKTVKAQRAIVGASLELIKERRSLKPEVRKAKRDDKAKADKEKKKADKAARKAEKAKLAAAQGSKVSKQQAKGAFQKVAATSR</sequence>
<name>RL24_CANGA</name>
<feature type="chain" id="PRO_0000136886" description="Large ribosomal subunit protein eL24">
    <location>
        <begin position="1"/>
        <end position="155"/>
    </location>
</feature>
<feature type="region of interest" description="Disordered" evidence="1">
    <location>
        <begin position="98"/>
        <end position="155"/>
    </location>
</feature>
<feature type="compositionally biased region" description="Basic and acidic residues" evidence="1">
    <location>
        <begin position="98"/>
        <end position="129"/>
    </location>
</feature>
<reference key="1">
    <citation type="journal article" date="2004" name="Nature">
        <title>Genome evolution in yeasts.</title>
        <authorList>
            <person name="Dujon B."/>
            <person name="Sherman D."/>
            <person name="Fischer G."/>
            <person name="Durrens P."/>
            <person name="Casaregola S."/>
            <person name="Lafontaine I."/>
            <person name="de Montigny J."/>
            <person name="Marck C."/>
            <person name="Neuveglise C."/>
            <person name="Talla E."/>
            <person name="Goffard N."/>
            <person name="Frangeul L."/>
            <person name="Aigle M."/>
            <person name="Anthouard V."/>
            <person name="Babour A."/>
            <person name="Barbe V."/>
            <person name="Barnay S."/>
            <person name="Blanchin S."/>
            <person name="Beckerich J.-M."/>
            <person name="Beyne E."/>
            <person name="Bleykasten C."/>
            <person name="Boisrame A."/>
            <person name="Boyer J."/>
            <person name="Cattolico L."/>
            <person name="Confanioleri F."/>
            <person name="de Daruvar A."/>
            <person name="Despons L."/>
            <person name="Fabre E."/>
            <person name="Fairhead C."/>
            <person name="Ferry-Dumazet H."/>
            <person name="Groppi A."/>
            <person name="Hantraye F."/>
            <person name="Hennequin C."/>
            <person name="Jauniaux N."/>
            <person name="Joyet P."/>
            <person name="Kachouri R."/>
            <person name="Kerrest A."/>
            <person name="Koszul R."/>
            <person name="Lemaire M."/>
            <person name="Lesur I."/>
            <person name="Ma L."/>
            <person name="Muller H."/>
            <person name="Nicaud J.-M."/>
            <person name="Nikolski M."/>
            <person name="Oztas S."/>
            <person name="Ozier-Kalogeropoulos O."/>
            <person name="Pellenz S."/>
            <person name="Potier S."/>
            <person name="Richard G.-F."/>
            <person name="Straub M.-L."/>
            <person name="Suleau A."/>
            <person name="Swennen D."/>
            <person name="Tekaia F."/>
            <person name="Wesolowski-Louvel M."/>
            <person name="Westhof E."/>
            <person name="Wirth B."/>
            <person name="Zeniou-Meyer M."/>
            <person name="Zivanovic Y."/>
            <person name="Bolotin-Fukuhara M."/>
            <person name="Thierry A."/>
            <person name="Bouchier C."/>
            <person name="Caudron B."/>
            <person name="Scarpelli C."/>
            <person name="Gaillardin C."/>
            <person name="Weissenbach J."/>
            <person name="Wincker P."/>
            <person name="Souciet J.-L."/>
        </authorList>
    </citation>
    <scope>NUCLEOTIDE SEQUENCE [LARGE SCALE GENOMIC DNA]</scope>
    <source>
        <strain>ATCC 2001 / BCRC 20586 / JCM 3761 / NBRC 0622 / NRRL Y-65 / CBS 138</strain>
    </source>
</reference>
<organism>
    <name type="scientific">Candida glabrata (strain ATCC 2001 / BCRC 20586 / JCM 3761 / NBRC 0622 / NRRL Y-65 / CBS 138)</name>
    <name type="common">Yeast</name>
    <name type="synonym">Nakaseomyces glabratus</name>
    <dbReference type="NCBI Taxonomy" id="284593"/>
    <lineage>
        <taxon>Eukaryota</taxon>
        <taxon>Fungi</taxon>
        <taxon>Dikarya</taxon>
        <taxon>Ascomycota</taxon>
        <taxon>Saccharomycotina</taxon>
        <taxon>Saccharomycetes</taxon>
        <taxon>Saccharomycetales</taxon>
        <taxon>Saccharomycetaceae</taxon>
        <taxon>Nakaseomyces</taxon>
    </lineage>
</organism>
<accession>Q6FXY9</accession>
<evidence type="ECO:0000256" key="1">
    <source>
        <dbReference type="SAM" id="MobiDB-lite"/>
    </source>
</evidence>
<evidence type="ECO:0000305" key="2"/>
<keyword id="KW-1185">Reference proteome</keyword>
<keyword id="KW-0687">Ribonucleoprotein</keyword>
<keyword id="KW-0689">Ribosomal protein</keyword>
<protein>
    <recommendedName>
        <fullName evidence="2">Large ribosomal subunit protein eL24</fullName>
    </recommendedName>
    <alternativeName>
        <fullName>60S ribosomal protein L24</fullName>
    </alternativeName>
</protein>